<gene>
    <name type="primary">KCTD19</name>
</gene>
<dbReference type="EMBL" id="AK097481">
    <property type="protein sequence ID" value="BAC05072.1"/>
    <property type="molecule type" value="mRNA"/>
</dbReference>
<dbReference type="EMBL" id="AK302748">
    <property type="protein sequence ID" value="BAG63961.1"/>
    <property type="molecule type" value="mRNA"/>
</dbReference>
<dbReference type="EMBL" id="BC117335">
    <property type="protein sequence ID" value="AAI17336.1"/>
    <property type="molecule type" value="mRNA"/>
</dbReference>
<dbReference type="CCDS" id="CCDS42179.1"/>
<dbReference type="RefSeq" id="NP_001094385.1">
    <property type="nucleotide sequence ID" value="NM_001100915.3"/>
</dbReference>
<dbReference type="SMR" id="Q17RG1"/>
<dbReference type="BioGRID" id="126971">
    <property type="interactions" value="7"/>
</dbReference>
<dbReference type="FunCoup" id="Q17RG1">
    <property type="interactions" value="20"/>
</dbReference>
<dbReference type="IntAct" id="Q17RG1">
    <property type="interactions" value="4"/>
</dbReference>
<dbReference type="MINT" id="Q17RG1"/>
<dbReference type="STRING" id="9606.ENSP00000305702"/>
<dbReference type="iPTMnet" id="Q17RG1"/>
<dbReference type="PhosphoSitePlus" id="Q17RG1"/>
<dbReference type="BioMuta" id="KCTD19"/>
<dbReference type="DMDM" id="121948228"/>
<dbReference type="jPOST" id="Q17RG1"/>
<dbReference type="MassIVE" id="Q17RG1"/>
<dbReference type="PaxDb" id="9606-ENSP00000305702"/>
<dbReference type="PeptideAtlas" id="Q17RG1"/>
<dbReference type="ProteomicsDB" id="61152"/>
<dbReference type="Antibodypedia" id="56054">
    <property type="antibodies" value="102 antibodies from 18 providers"/>
</dbReference>
<dbReference type="DNASU" id="146212"/>
<dbReference type="Ensembl" id="ENST00000304372.6">
    <property type="protein sequence ID" value="ENSP00000305702.5"/>
    <property type="gene ID" value="ENSG00000168676.11"/>
</dbReference>
<dbReference type="GeneID" id="146212"/>
<dbReference type="KEGG" id="hsa:146212"/>
<dbReference type="MANE-Select" id="ENST00000304372.6">
    <property type="protein sequence ID" value="ENSP00000305702.5"/>
    <property type="RefSeq nucleotide sequence ID" value="NM_001100915.3"/>
    <property type="RefSeq protein sequence ID" value="NP_001094385.1"/>
</dbReference>
<dbReference type="UCSC" id="uc002esu.3">
    <property type="organism name" value="human"/>
</dbReference>
<dbReference type="AGR" id="HGNC:24753"/>
<dbReference type="CTD" id="146212"/>
<dbReference type="DisGeNET" id="146212"/>
<dbReference type="GeneCards" id="KCTD19"/>
<dbReference type="HGNC" id="HGNC:24753">
    <property type="gene designation" value="KCTD19"/>
</dbReference>
<dbReference type="HPA" id="ENSG00000168676">
    <property type="expression patterns" value="Tissue enriched (testis)"/>
</dbReference>
<dbReference type="MIM" id="619943">
    <property type="type" value="gene"/>
</dbReference>
<dbReference type="neXtProt" id="NX_Q17RG1"/>
<dbReference type="OpenTargets" id="ENSG00000168676"/>
<dbReference type="PharmGKB" id="PA142671640"/>
<dbReference type="VEuPathDB" id="HostDB:ENSG00000168676"/>
<dbReference type="eggNOG" id="KOG0342">
    <property type="taxonomic scope" value="Eukaryota"/>
</dbReference>
<dbReference type="eggNOG" id="KOG2723">
    <property type="taxonomic scope" value="Eukaryota"/>
</dbReference>
<dbReference type="GeneTree" id="ENSGT00390000007606"/>
<dbReference type="HOGENOM" id="CLU_014244_0_0_1"/>
<dbReference type="InParanoid" id="Q17RG1"/>
<dbReference type="OMA" id="EEMFYAR"/>
<dbReference type="OrthoDB" id="10003873at2759"/>
<dbReference type="PAN-GO" id="Q17RG1">
    <property type="GO annotations" value="0 GO annotations based on evolutionary models"/>
</dbReference>
<dbReference type="PhylomeDB" id="Q17RG1"/>
<dbReference type="TreeFam" id="TF315332"/>
<dbReference type="PathwayCommons" id="Q17RG1"/>
<dbReference type="SignaLink" id="Q17RG1"/>
<dbReference type="BioGRID-ORCS" id="146212">
    <property type="hits" value="13 hits in 1146 CRISPR screens"/>
</dbReference>
<dbReference type="ChiTaRS" id="KCTD19">
    <property type="organism name" value="human"/>
</dbReference>
<dbReference type="GenomeRNAi" id="146212"/>
<dbReference type="Pharos" id="Q17RG1">
    <property type="development level" value="Tdark"/>
</dbReference>
<dbReference type="PRO" id="PR:Q17RG1"/>
<dbReference type="Proteomes" id="UP000005640">
    <property type="component" value="Chromosome 16"/>
</dbReference>
<dbReference type="RNAct" id="Q17RG1">
    <property type="molecule type" value="protein"/>
</dbReference>
<dbReference type="Bgee" id="ENSG00000168676">
    <property type="expression patterns" value="Expressed in right testis and 124 other cell types or tissues"/>
</dbReference>
<dbReference type="ExpressionAtlas" id="Q17RG1">
    <property type="expression patterns" value="baseline and differential"/>
</dbReference>
<dbReference type="GO" id="GO:0005634">
    <property type="term" value="C:nucleus"/>
    <property type="evidence" value="ECO:0000250"/>
    <property type="project" value="UniProtKB"/>
</dbReference>
<dbReference type="GO" id="GO:0042802">
    <property type="term" value="F:identical protein binding"/>
    <property type="evidence" value="ECO:0007669"/>
    <property type="project" value="UniProtKB-ARBA"/>
</dbReference>
<dbReference type="GO" id="GO:0030154">
    <property type="term" value="P:cell differentiation"/>
    <property type="evidence" value="ECO:0007669"/>
    <property type="project" value="UniProtKB-KW"/>
</dbReference>
<dbReference type="GO" id="GO:0007140">
    <property type="term" value="P:male meiotic nuclear division"/>
    <property type="evidence" value="ECO:0000250"/>
    <property type="project" value="UniProtKB"/>
</dbReference>
<dbReference type="GO" id="GO:0051260">
    <property type="term" value="P:protein homooligomerization"/>
    <property type="evidence" value="ECO:0007669"/>
    <property type="project" value="InterPro"/>
</dbReference>
<dbReference type="GO" id="GO:0007283">
    <property type="term" value="P:spermatogenesis"/>
    <property type="evidence" value="ECO:0007669"/>
    <property type="project" value="UniProtKB-KW"/>
</dbReference>
<dbReference type="CDD" id="cd18373">
    <property type="entry name" value="BTB1_POZ_KCTD19"/>
    <property type="match status" value="1"/>
</dbReference>
<dbReference type="CDD" id="cd18374">
    <property type="entry name" value="BTB2_POZ_KCTD19"/>
    <property type="match status" value="1"/>
</dbReference>
<dbReference type="Gene3D" id="3.30.710.10">
    <property type="entry name" value="Potassium Channel Kv1.1, Chain A"/>
    <property type="match status" value="2"/>
</dbReference>
<dbReference type="InterPro" id="IPR011333">
    <property type="entry name" value="SKP1/BTB/POZ_sf"/>
</dbReference>
<dbReference type="InterPro" id="IPR003131">
    <property type="entry name" value="T1-type_BTB"/>
</dbReference>
<dbReference type="PANTHER" id="PTHR14499:SF20">
    <property type="entry name" value="BTB_POZ DOMAIN-CONTAINING PROTEIN KCTD19"/>
    <property type="match status" value="1"/>
</dbReference>
<dbReference type="PANTHER" id="PTHR14499">
    <property type="entry name" value="POTASSIUM CHANNEL TETRAMERIZATION DOMAIN-CONTAINING"/>
    <property type="match status" value="1"/>
</dbReference>
<dbReference type="Pfam" id="PF02214">
    <property type="entry name" value="BTB_2"/>
    <property type="match status" value="1"/>
</dbReference>
<dbReference type="SUPFAM" id="SSF54695">
    <property type="entry name" value="POZ domain"/>
    <property type="match status" value="3"/>
</dbReference>
<protein>
    <recommendedName>
        <fullName>BTB/POZ domain-containing protein KCTD19</fullName>
    </recommendedName>
    <alternativeName>
        <fullName>Potassium channel tetramerization domain-containing protein 19</fullName>
    </alternativeName>
</protein>
<keyword id="KW-0010">Activator</keyword>
<keyword id="KW-0221">Differentiation</keyword>
<keyword id="KW-0469">Meiosis</keyword>
<keyword id="KW-0539">Nucleus</keyword>
<keyword id="KW-0597">Phosphoprotein</keyword>
<keyword id="KW-1267">Proteomics identification</keyword>
<keyword id="KW-1185">Reference proteome</keyword>
<keyword id="KW-0677">Repeat</keyword>
<keyword id="KW-0744">Spermatogenesis</keyword>
<keyword id="KW-0804">Transcription</keyword>
<keyword id="KW-0805">Transcription regulation</keyword>
<name>KCD19_HUMAN</name>
<feature type="chain" id="PRO_0000313587" description="BTB/POZ domain-containing protein KCTD19">
    <location>
        <begin position="1"/>
        <end position="926"/>
    </location>
</feature>
<feature type="domain" description="BTB 1">
    <location>
        <begin position="18"/>
        <end position="72"/>
    </location>
</feature>
<feature type="domain" description="BTB 2">
    <location>
        <begin position="398"/>
        <end position="485"/>
    </location>
</feature>
<feature type="region of interest" description="Disordered" evidence="2">
    <location>
        <begin position="673"/>
        <end position="751"/>
    </location>
</feature>
<feature type="compositionally biased region" description="Basic and acidic residues" evidence="2">
    <location>
        <begin position="730"/>
        <end position="742"/>
    </location>
</feature>
<feature type="modified residue" description="Phosphoserine" evidence="1">
    <location>
        <position position="270"/>
    </location>
</feature>
<feature type="sequence variant" id="VAR_049723" description="In dbSNP:rs16957289.">
    <original>E</original>
    <variation>K</variation>
    <location>
        <position position="750"/>
    </location>
</feature>
<feature type="sequence conflict" description="In Ref. 1; BAC05072." evidence="3" ref="1">
    <original>A</original>
    <variation>V</variation>
    <location>
        <position position="579"/>
    </location>
</feature>
<accession>Q17RG1</accession>
<accession>B4DZ49</accession>
<accession>Q8N804</accession>
<comment type="function">
    <text evidence="1">Transcription regulator which is essential for male fertility and for the completion of meiotic prophase in spermatocytes. Regulates progression of the pachytene stage of meiotic prophase and promotes the transcriptional activation activity ZNF541. Required for the organization of chromosomes during metaphase I.</text>
</comment>
<comment type="subunit">
    <text evidence="1">Identified in a complex with ZNF541, HDAC1 and HSPA2. Identified in a complex with ZNF541 and HDAC1. Identified in a complex with HDAC1, HDAC2, DNTTIP1 and ZNF541.</text>
</comment>
<comment type="interaction">
    <interactant intactId="EBI-10239046">
        <id>Q17RG1</id>
    </interactant>
    <interactant intactId="EBI-10178224">
        <id>P10073</id>
        <label>ZSCAN22</label>
    </interactant>
    <organismsDiffer>false</organismsDiffer>
    <experiments>3</experiments>
</comment>
<comment type="subcellular location">
    <subcellularLocation>
        <location evidence="1">Nucleus</location>
    </subcellularLocation>
</comment>
<organism>
    <name type="scientific">Homo sapiens</name>
    <name type="common">Human</name>
    <dbReference type="NCBI Taxonomy" id="9606"/>
    <lineage>
        <taxon>Eukaryota</taxon>
        <taxon>Metazoa</taxon>
        <taxon>Chordata</taxon>
        <taxon>Craniata</taxon>
        <taxon>Vertebrata</taxon>
        <taxon>Euteleostomi</taxon>
        <taxon>Mammalia</taxon>
        <taxon>Eutheria</taxon>
        <taxon>Euarchontoglires</taxon>
        <taxon>Primates</taxon>
        <taxon>Haplorrhini</taxon>
        <taxon>Catarrhini</taxon>
        <taxon>Hominidae</taxon>
        <taxon>Homo</taxon>
    </lineage>
</organism>
<evidence type="ECO:0000250" key="1">
    <source>
        <dbReference type="UniProtKB" id="Q562E2"/>
    </source>
</evidence>
<evidence type="ECO:0000256" key="2">
    <source>
        <dbReference type="SAM" id="MobiDB-lite"/>
    </source>
</evidence>
<evidence type="ECO:0000305" key="3"/>
<sequence length="926" mass="104938">MEESGMAHESAEDLFHFNVGGWHFSVPRSKLSQFPDSLLWKEASALTSSESQRLFIDRDGSTFRHVHYYLYTSKLSFSSCAELNLLYEQALGLQLMPLLQTLDNLKEGKHHLRVRPADLPVAERASLNYWRTWKCISKPSEFPIKSPAFTGLHDKAPLGLMDTPLLDTEEEVHYCFLPLDLVAKYPSLVTEDNLLWLAETVALIECECSEFRFIVNFLRSQKILLPDNFSNIDVLEAEVEILEIPALTEAVRWYRMNMGGCSPTTCSPLSPGKGARTASLESVKPLYTMALGLLVKYPDSALGQLRIESTLDGSRLYITGNGVLFQHVKNWLGTCRLPLTETISEVYELCAFLDKRDITYEPIKVALKTHLEPRTLAPMDVLNEWTAEITVYSPQQIIKVYVGSHWYATTLQTLLKYPELLSNPQRVYWITYGQTLLIHGDGQMFRHILNFLRLGKLFLPSEFKEWPLFCQEVEEYHIPSLSEALAQCEAYKSWTQEKESENEEAFSIRRLHVVTEGPGSLVEFSRDTKETTAYMPVDFEDCSDRTPWNKAKGNLVRSNQMDEAEQYTRPIQVSLCRNAKRAGNPSTYSHCRGLCTNPGHWGSHPESPPKKKCTTINLTQKSETKDPPATPMQKLISLVREWDMVNCKQWEFQPLTATRSSPLEEATLQLPLGSEAASQPSTSAAWKAHSTASEKDPGPQAGAGAGAKDKGPEPTFKPYLPPKRAGTLKDWSKQRTKERESPAPEQPLPEASEVDSLGVILKVTHPPVVGSDGFCMFFEDSIIYTTEMDNLRHTTPTASPQPQEVTFLSFSLSWEEMFYAQKCHCFLADIIMDSIRQKDPKAITAKVVSLANRLWTLHISPKQFVVDLLAITGFKDDRHTQERLYSWVELTLPFARKYGRCMDLLIQRGLSRSVSYSILGKYLQED</sequence>
<proteinExistence type="evidence at protein level"/>
<reference key="1">
    <citation type="journal article" date="2004" name="Nat. Genet.">
        <title>Complete sequencing and characterization of 21,243 full-length human cDNAs.</title>
        <authorList>
            <person name="Ota T."/>
            <person name="Suzuki Y."/>
            <person name="Nishikawa T."/>
            <person name="Otsuki T."/>
            <person name="Sugiyama T."/>
            <person name="Irie R."/>
            <person name="Wakamatsu A."/>
            <person name="Hayashi K."/>
            <person name="Sato H."/>
            <person name="Nagai K."/>
            <person name="Kimura K."/>
            <person name="Makita H."/>
            <person name="Sekine M."/>
            <person name="Obayashi M."/>
            <person name="Nishi T."/>
            <person name="Shibahara T."/>
            <person name="Tanaka T."/>
            <person name="Ishii S."/>
            <person name="Yamamoto J."/>
            <person name="Saito K."/>
            <person name="Kawai Y."/>
            <person name="Isono Y."/>
            <person name="Nakamura Y."/>
            <person name="Nagahari K."/>
            <person name="Murakami K."/>
            <person name="Yasuda T."/>
            <person name="Iwayanagi T."/>
            <person name="Wagatsuma M."/>
            <person name="Shiratori A."/>
            <person name="Sudo H."/>
            <person name="Hosoiri T."/>
            <person name="Kaku Y."/>
            <person name="Kodaira H."/>
            <person name="Kondo H."/>
            <person name="Sugawara M."/>
            <person name="Takahashi M."/>
            <person name="Kanda K."/>
            <person name="Yokoi T."/>
            <person name="Furuya T."/>
            <person name="Kikkawa E."/>
            <person name="Omura Y."/>
            <person name="Abe K."/>
            <person name="Kamihara K."/>
            <person name="Katsuta N."/>
            <person name="Sato K."/>
            <person name="Tanikawa M."/>
            <person name="Yamazaki M."/>
            <person name="Ninomiya K."/>
            <person name="Ishibashi T."/>
            <person name="Yamashita H."/>
            <person name="Murakawa K."/>
            <person name="Fujimori K."/>
            <person name="Tanai H."/>
            <person name="Kimata M."/>
            <person name="Watanabe M."/>
            <person name="Hiraoka S."/>
            <person name="Chiba Y."/>
            <person name="Ishida S."/>
            <person name="Ono Y."/>
            <person name="Takiguchi S."/>
            <person name="Watanabe S."/>
            <person name="Yosida M."/>
            <person name="Hotuta T."/>
            <person name="Kusano J."/>
            <person name="Kanehori K."/>
            <person name="Takahashi-Fujii A."/>
            <person name="Hara H."/>
            <person name="Tanase T.-O."/>
            <person name="Nomura Y."/>
            <person name="Togiya S."/>
            <person name="Komai F."/>
            <person name="Hara R."/>
            <person name="Takeuchi K."/>
            <person name="Arita M."/>
            <person name="Imose N."/>
            <person name="Musashino K."/>
            <person name="Yuuki H."/>
            <person name="Oshima A."/>
            <person name="Sasaki N."/>
            <person name="Aotsuka S."/>
            <person name="Yoshikawa Y."/>
            <person name="Matsunawa H."/>
            <person name="Ichihara T."/>
            <person name="Shiohata N."/>
            <person name="Sano S."/>
            <person name="Moriya S."/>
            <person name="Momiyama H."/>
            <person name="Satoh N."/>
            <person name="Takami S."/>
            <person name="Terashima Y."/>
            <person name="Suzuki O."/>
            <person name="Nakagawa S."/>
            <person name="Senoh A."/>
            <person name="Mizoguchi H."/>
            <person name="Goto Y."/>
            <person name="Shimizu F."/>
            <person name="Wakebe H."/>
            <person name="Hishigaki H."/>
            <person name="Watanabe T."/>
            <person name="Sugiyama A."/>
            <person name="Takemoto M."/>
            <person name="Kawakami B."/>
            <person name="Yamazaki M."/>
            <person name="Watanabe K."/>
            <person name="Kumagai A."/>
            <person name="Itakura S."/>
            <person name="Fukuzumi Y."/>
            <person name="Fujimori Y."/>
            <person name="Komiyama M."/>
            <person name="Tashiro H."/>
            <person name="Tanigami A."/>
            <person name="Fujiwara T."/>
            <person name="Ono T."/>
            <person name="Yamada K."/>
            <person name="Fujii Y."/>
            <person name="Ozaki K."/>
            <person name="Hirao M."/>
            <person name="Ohmori Y."/>
            <person name="Kawabata A."/>
            <person name="Hikiji T."/>
            <person name="Kobatake N."/>
            <person name="Inagaki H."/>
            <person name="Ikema Y."/>
            <person name="Okamoto S."/>
            <person name="Okitani R."/>
            <person name="Kawakami T."/>
            <person name="Noguchi S."/>
            <person name="Itoh T."/>
            <person name="Shigeta K."/>
            <person name="Senba T."/>
            <person name="Matsumura K."/>
            <person name="Nakajima Y."/>
            <person name="Mizuno T."/>
            <person name="Morinaga M."/>
            <person name="Sasaki M."/>
            <person name="Togashi T."/>
            <person name="Oyama M."/>
            <person name="Hata H."/>
            <person name="Watanabe M."/>
            <person name="Komatsu T."/>
            <person name="Mizushima-Sugano J."/>
            <person name="Satoh T."/>
            <person name="Shirai Y."/>
            <person name="Takahashi Y."/>
            <person name="Nakagawa K."/>
            <person name="Okumura K."/>
            <person name="Nagase T."/>
            <person name="Nomura N."/>
            <person name="Kikuchi H."/>
            <person name="Masuho Y."/>
            <person name="Yamashita R."/>
            <person name="Nakai K."/>
            <person name="Yada T."/>
            <person name="Nakamura Y."/>
            <person name="Ohara O."/>
            <person name="Isogai T."/>
            <person name="Sugano S."/>
        </authorList>
    </citation>
    <scope>NUCLEOTIDE SEQUENCE [LARGE SCALE MRNA]</scope>
    <source>
        <tissue>Testis</tissue>
    </source>
</reference>
<reference key="2">
    <citation type="journal article" date="2004" name="Genome Res.">
        <title>The status, quality, and expansion of the NIH full-length cDNA project: the Mammalian Gene Collection (MGC).</title>
        <authorList>
            <consortium name="The MGC Project Team"/>
        </authorList>
    </citation>
    <scope>NUCLEOTIDE SEQUENCE [LARGE SCALE MRNA]</scope>
</reference>